<reference key="1">
    <citation type="journal article" date="2002" name="DNA Res.">
        <title>Complete genomic sequence of nitrogen-fixing symbiotic bacterium Bradyrhizobium japonicum USDA110.</title>
        <authorList>
            <person name="Kaneko T."/>
            <person name="Nakamura Y."/>
            <person name="Sato S."/>
            <person name="Minamisawa K."/>
            <person name="Uchiumi T."/>
            <person name="Sasamoto S."/>
            <person name="Watanabe A."/>
            <person name="Idesawa K."/>
            <person name="Iriguchi M."/>
            <person name="Kawashima K."/>
            <person name="Kohara M."/>
            <person name="Matsumoto M."/>
            <person name="Shimpo S."/>
            <person name="Tsuruoka H."/>
            <person name="Wada T."/>
            <person name="Yamada M."/>
            <person name="Tabata S."/>
        </authorList>
    </citation>
    <scope>NUCLEOTIDE SEQUENCE [LARGE SCALE GENOMIC DNA]</scope>
    <source>
        <strain>JCM 10833 / BCRC 13528 / IAM 13628 / NBRC 14792 / USDA 110</strain>
    </source>
</reference>
<feature type="chain" id="PRO_0000220246" description="Homogentisate 1,2-dioxygenase">
    <location>
        <begin position="1"/>
        <end position="448"/>
    </location>
</feature>
<feature type="active site" description="Proton acceptor" evidence="1">
    <location>
        <position position="303"/>
    </location>
</feature>
<feature type="binding site" evidence="1">
    <location>
        <position position="346"/>
    </location>
    <ligand>
        <name>Fe cation</name>
        <dbReference type="ChEBI" id="CHEBI:24875"/>
    </ligand>
</feature>
<feature type="binding site" evidence="1">
    <location>
        <position position="352"/>
    </location>
    <ligand>
        <name>Fe cation</name>
        <dbReference type="ChEBI" id="CHEBI:24875"/>
    </ligand>
</feature>
<feature type="binding site" evidence="1">
    <location>
        <position position="361"/>
    </location>
    <ligand>
        <name>homogentisate</name>
        <dbReference type="ChEBI" id="CHEBI:16169"/>
    </ligand>
</feature>
<feature type="binding site" evidence="1">
    <location>
        <position position="382"/>
    </location>
    <ligand>
        <name>Fe cation</name>
        <dbReference type="ChEBI" id="CHEBI:24875"/>
    </ligand>
</feature>
<feature type="binding site" evidence="1">
    <location>
        <position position="382"/>
    </location>
    <ligand>
        <name>homogentisate</name>
        <dbReference type="ChEBI" id="CHEBI:16169"/>
    </ligand>
</feature>
<protein>
    <recommendedName>
        <fullName evidence="1">Homogentisate 1,2-dioxygenase</fullName>
        <shortName evidence="1">HGDO</shortName>
        <ecNumber evidence="1">1.13.11.5</ecNumber>
    </recommendedName>
    <alternativeName>
        <fullName evidence="1">Homogentisate oxygenase</fullName>
    </alternativeName>
    <alternativeName>
        <fullName evidence="1">Homogentisic acid oxidase</fullName>
    </alternativeName>
    <alternativeName>
        <fullName evidence="1">Homogentisicase</fullName>
    </alternativeName>
</protein>
<accession>Q89XH1</accession>
<organism>
    <name type="scientific">Bradyrhizobium diazoefficiens (strain JCM 10833 / BCRC 13528 / IAM 13628 / NBRC 14792 / USDA 110)</name>
    <dbReference type="NCBI Taxonomy" id="224911"/>
    <lineage>
        <taxon>Bacteria</taxon>
        <taxon>Pseudomonadati</taxon>
        <taxon>Pseudomonadota</taxon>
        <taxon>Alphaproteobacteria</taxon>
        <taxon>Hyphomicrobiales</taxon>
        <taxon>Nitrobacteraceae</taxon>
        <taxon>Bradyrhizobium</taxon>
    </lineage>
</organism>
<comment type="function">
    <text evidence="1">Involved in the catabolism of homogentisate (2,5-dihydroxyphenylacetate or 2,5-OH-PhAc), a central intermediate in the degradation of phenylalanine and tyrosine. Catalyzes the oxidative ring cleavage of the aromatic ring of homogentisate to yield maleylacetoacetate.</text>
</comment>
<comment type="catalytic activity">
    <reaction evidence="1">
        <text>homogentisate + O2 = 4-maleylacetoacetate + H(+)</text>
        <dbReference type="Rhea" id="RHEA:15449"/>
        <dbReference type="ChEBI" id="CHEBI:15378"/>
        <dbReference type="ChEBI" id="CHEBI:15379"/>
        <dbReference type="ChEBI" id="CHEBI:16169"/>
        <dbReference type="ChEBI" id="CHEBI:17105"/>
        <dbReference type="EC" id="1.13.11.5"/>
    </reaction>
</comment>
<comment type="cofactor">
    <cofactor evidence="1">
        <name>Fe cation</name>
        <dbReference type="ChEBI" id="CHEBI:24875"/>
    </cofactor>
</comment>
<comment type="pathway">
    <text evidence="1">Amino-acid degradation; L-phenylalanine degradation; acetoacetate and fumarate from L-phenylalanine: step 4/6.</text>
</comment>
<comment type="subunit">
    <text evidence="1">Hexamer; dimer of trimers.</text>
</comment>
<comment type="similarity">
    <text evidence="1">Belongs to the homogentisate dioxygenase family.</text>
</comment>
<comment type="sequence caution" evidence="2">
    <conflict type="erroneous initiation">
        <sequence resource="EMBL-CDS" id="BAC45608"/>
    </conflict>
    <text>Extended N-terminus.</text>
</comment>
<evidence type="ECO:0000255" key="1">
    <source>
        <dbReference type="HAMAP-Rule" id="MF_00334"/>
    </source>
</evidence>
<evidence type="ECO:0000305" key="2"/>
<sequence>MNINTSPDQIIRSSAQVTPGYMSGFGNSFETEALPGALPIGRNSPQRCAYGLYAEQLSGSPFTAPRGTNERSWLYRIRPSVKHSGRFEKADAGLWRSAPCHEYDLPIAQMRWDPTPVPKEEVTFVQGVQTMTTAGDVNTQAGMAAHVYLITKSMVDQHFYNADGELMFVLQQGNLRLVTEFGRIDAEPGEIVVIPRGVKFRVEIPNGPARGYLCENYGGAFTLPERGPIGANCLANARDFLTPVANYEDKDTPTELFVKWGGSLFKTTLPHSPIDVVAWHGNYAPYKYDLRTFSPVGAIGFDHPDPSIFTVLTSPSETAGTANIDFVIFPERWMVADNTFRPPWYHMNIMSEFMGLIYGVYDAKPQGFVPGGMSLHNCMLPHGPDRDAFEHASNGELKPVKLTGTMAFMFETRYPQRVTAHAANASTLQDDYADCWKGLEKRFDPNRP</sequence>
<name>HGD_BRADU</name>
<dbReference type="EC" id="1.13.11.5" evidence="1"/>
<dbReference type="EMBL" id="BA000040">
    <property type="protein sequence ID" value="BAC45608.1"/>
    <property type="status" value="ALT_INIT"/>
    <property type="molecule type" value="Genomic_DNA"/>
</dbReference>
<dbReference type="RefSeq" id="NP_766983.1">
    <property type="nucleotide sequence ID" value="NC_004463.1"/>
</dbReference>
<dbReference type="RefSeq" id="WP_038967448.1">
    <property type="nucleotide sequence ID" value="NC_004463.1"/>
</dbReference>
<dbReference type="SMR" id="Q89XH1"/>
<dbReference type="STRING" id="224911.AAV28_40965"/>
<dbReference type="EnsemblBacteria" id="BAC45608">
    <property type="protein sequence ID" value="BAC45608"/>
    <property type="gene ID" value="BAC45608"/>
</dbReference>
<dbReference type="GeneID" id="46495492"/>
<dbReference type="KEGG" id="bja:bll0343"/>
<dbReference type="PATRIC" id="fig|224911.44.peg.8868"/>
<dbReference type="eggNOG" id="COG3508">
    <property type="taxonomic scope" value="Bacteria"/>
</dbReference>
<dbReference type="HOGENOM" id="CLU_027174_0_0_5"/>
<dbReference type="InParanoid" id="Q89XH1"/>
<dbReference type="OrthoDB" id="9811253at2"/>
<dbReference type="UniPathway" id="UPA00139">
    <property type="reaction ID" value="UER00339"/>
</dbReference>
<dbReference type="Proteomes" id="UP000002526">
    <property type="component" value="Chromosome"/>
</dbReference>
<dbReference type="GO" id="GO:0004411">
    <property type="term" value="F:homogentisate 1,2-dioxygenase activity"/>
    <property type="evidence" value="ECO:0000318"/>
    <property type="project" value="GO_Central"/>
</dbReference>
<dbReference type="GO" id="GO:0005506">
    <property type="term" value="F:iron ion binding"/>
    <property type="evidence" value="ECO:0007669"/>
    <property type="project" value="UniProtKB-UniRule"/>
</dbReference>
<dbReference type="GO" id="GO:0006559">
    <property type="term" value="P:L-phenylalanine catabolic process"/>
    <property type="evidence" value="ECO:0000318"/>
    <property type="project" value="GO_Central"/>
</dbReference>
<dbReference type="GO" id="GO:0006572">
    <property type="term" value="P:tyrosine catabolic process"/>
    <property type="evidence" value="ECO:0007669"/>
    <property type="project" value="UniProtKB-UniRule"/>
</dbReference>
<dbReference type="CDD" id="cd07000">
    <property type="entry name" value="cupin_HGO_N"/>
    <property type="match status" value="1"/>
</dbReference>
<dbReference type="FunFam" id="2.60.120.10:FF:000053">
    <property type="entry name" value="Homogentisate 1,2-dioxygenase"/>
    <property type="match status" value="1"/>
</dbReference>
<dbReference type="Gene3D" id="2.60.120.10">
    <property type="entry name" value="Jelly Rolls"/>
    <property type="match status" value="2"/>
</dbReference>
<dbReference type="HAMAP" id="MF_00334">
    <property type="entry name" value="Homogentis_dioxygen"/>
    <property type="match status" value="1"/>
</dbReference>
<dbReference type="InterPro" id="IPR046451">
    <property type="entry name" value="HgmA_C"/>
</dbReference>
<dbReference type="InterPro" id="IPR046452">
    <property type="entry name" value="HgmA_N"/>
</dbReference>
<dbReference type="InterPro" id="IPR005708">
    <property type="entry name" value="Homogentis_dOase"/>
</dbReference>
<dbReference type="InterPro" id="IPR022950">
    <property type="entry name" value="Homogentis_dOase_bac"/>
</dbReference>
<dbReference type="InterPro" id="IPR014710">
    <property type="entry name" value="RmlC-like_jellyroll"/>
</dbReference>
<dbReference type="InterPro" id="IPR011051">
    <property type="entry name" value="RmlC_Cupin_sf"/>
</dbReference>
<dbReference type="NCBIfam" id="TIGR01015">
    <property type="entry name" value="hmgA"/>
    <property type="match status" value="1"/>
</dbReference>
<dbReference type="PANTHER" id="PTHR11056">
    <property type="entry name" value="HOMOGENTISATE 1,2-DIOXYGENASE"/>
    <property type="match status" value="1"/>
</dbReference>
<dbReference type="PANTHER" id="PTHR11056:SF0">
    <property type="entry name" value="HOMOGENTISATE 1,2-DIOXYGENASE"/>
    <property type="match status" value="1"/>
</dbReference>
<dbReference type="Pfam" id="PF04209">
    <property type="entry name" value="HgmA_C"/>
    <property type="match status" value="1"/>
</dbReference>
<dbReference type="Pfam" id="PF20510">
    <property type="entry name" value="HgmA_N"/>
    <property type="match status" value="1"/>
</dbReference>
<dbReference type="SUPFAM" id="SSF51182">
    <property type="entry name" value="RmlC-like cupins"/>
    <property type="match status" value="1"/>
</dbReference>
<keyword id="KW-0223">Dioxygenase</keyword>
<keyword id="KW-0408">Iron</keyword>
<keyword id="KW-0479">Metal-binding</keyword>
<keyword id="KW-0560">Oxidoreductase</keyword>
<keyword id="KW-0585">Phenylalanine catabolism</keyword>
<keyword id="KW-1185">Reference proteome</keyword>
<keyword id="KW-0828">Tyrosine catabolism</keyword>
<gene>
    <name evidence="1" type="primary">hmgA</name>
    <name type="ordered locus">bll0343</name>
</gene>
<proteinExistence type="inferred from homology"/>